<evidence type="ECO:0000305" key="1"/>
<proteinExistence type="inferred from homology"/>
<organism>
    <name type="scientific">Oryza sativa subsp. japonica</name>
    <name type="common">Rice</name>
    <dbReference type="NCBI Taxonomy" id="39947"/>
    <lineage>
        <taxon>Eukaryota</taxon>
        <taxon>Viridiplantae</taxon>
        <taxon>Streptophyta</taxon>
        <taxon>Embryophyta</taxon>
        <taxon>Tracheophyta</taxon>
        <taxon>Spermatophyta</taxon>
        <taxon>Magnoliopsida</taxon>
        <taxon>Liliopsida</taxon>
        <taxon>Poales</taxon>
        <taxon>Poaceae</taxon>
        <taxon>BOP clade</taxon>
        <taxon>Oryzoideae</taxon>
        <taxon>Oryzeae</taxon>
        <taxon>Oryzinae</taxon>
        <taxon>Oryza</taxon>
        <taxon>Oryza sativa</taxon>
    </lineage>
</organism>
<keyword id="KW-0067">ATP-binding</keyword>
<keyword id="KW-0418">Kinase</keyword>
<keyword id="KW-0520">NAD</keyword>
<keyword id="KW-0521">NADP</keyword>
<keyword id="KW-0547">Nucleotide-binding</keyword>
<keyword id="KW-1185">Reference proteome</keyword>
<keyword id="KW-0808">Transferase</keyword>
<dbReference type="EC" id="2.7.1.23"/>
<dbReference type="EMBL" id="AC136219">
    <property type="protein sequence ID" value="AAV31342.1"/>
    <property type="molecule type" value="Genomic_DNA"/>
</dbReference>
<dbReference type="EMBL" id="AP014961">
    <property type="status" value="NOT_ANNOTATED_CDS"/>
    <property type="molecule type" value="Genomic_DNA"/>
</dbReference>
<dbReference type="SMR" id="Q60E60"/>
<dbReference type="FunCoup" id="Q60E60">
    <property type="interactions" value="2306"/>
</dbReference>
<dbReference type="STRING" id="39947.Q60E60"/>
<dbReference type="PaxDb" id="39947-Q60E60"/>
<dbReference type="eggNOG" id="KOG2178">
    <property type="taxonomic scope" value="Eukaryota"/>
</dbReference>
<dbReference type="InParanoid" id="Q60E60"/>
<dbReference type="Proteomes" id="UP000000763">
    <property type="component" value="Chromosome 5"/>
</dbReference>
<dbReference type="Proteomes" id="UP000059680">
    <property type="component" value="Chromosome 5"/>
</dbReference>
<dbReference type="GO" id="GO:0005524">
    <property type="term" value="F:ATP binding"/>
    <property type="evidence" value="ECO:0007669"/>
    <property type="project" value="UniProtKB-KW"/>
</dbReference>
<dbReference type="GO" id="GO:0003951">
    <property type="term" value="F:NAD+ kinase activity"/>
    <property type="evidence" value="ECO:0000318"/>
    <property type="project" value="GO_Central"/>
</dbReference>
<dbReference type="GO" id="GO:0019674">
    <property type="term" value="P:NAD metabolic process"/>
    <property type="evidence" value="ECO:0007669"/>
    <property type="project" value="InterPro"/>
</dbReference>
<dbReference type="GO" id="GO:0006741">
    <property type="term" value="P:NADP biosynthetic process"/>
    <property type="evidence" value="ECO:0000318"/>
    <property type="project" value="GO_Central"/>
</dbReference>
<dbReference type="FunFam" id="3.40.50.10330:FF:000018">
    <property type="entry name" value="Probable NAD kinase 1"/>
    <property type="match status" value="1"/>
</dbReference>
<dbReference type="FunFam" id="2.60.200.30:FF:000006">
    <property type="entry name" value="probable NAD kinase 1"/>
    <property type="match status" value="1"/>
</dbReference>
<dbReference type="Gene3D" id="3.40.50.10330">
    <property type="entry name" value="Probable inorganic polyphosphate/atp-NAD kinase, domain 1"/>
    <property type="match status" value="1"/>
</dbReference>
<dbReference type="Gene3D" id="2.60.200.30">
    <property type="entry name" value="Probable inorganic polyphosphate/atp-NAD kinase, domain 2"/>
    <property type="match status" value="1"/>
</dbReference>
<dbReference type="HAMAP" id="MF_00361">
    <property type="entry name" value="NAD_kinase"/>
    <property type="match status" value="1"/>
</dbReference>
<dbReference type="InterPro" id="IPR017438">
    <property type="entry name" value="ATP-NAD_kinase_N"/>
</dbReference>
<dbReference type="InterPro" id="IPR017437">
    <property type="entry name" value="ATP-NAD_kinase_PpnK-typ_C"/>
</dbReference>
<dbReference type="InterPro" id="IPR016064">
    <property type="entry name" value="NAD/diacylglycerol_kinase_sf"/>
</dbReference>
<dbReference type="InterPro" id="IPR002504">
    <property type="entry name" value="NADK"/>
</dbReference>
<dbReference type="PANTHER" id="PTHR20275">
    <property type="entry name" value="NAD KINASE"/>
    <property type="match status" value="1"/>
</dbReference>
<dbReference type="PANTHER" id="PTHR20275:SF31">
    <property type="entry name" value="NAD KINASE 3-RELATED"/>
    <property type="match status" value="1"/>
</dbReference>
<dbReference type="Pfam" id="PF01513">
    <property type="entry name" value="NAD_kinase"/>
    <property type="match status" value="1"/>
</dbReference>
<dbReference type="Pfam" id="PF20143">
    <property type="entry name" value="NAD_kinase_C"/>
    <property type="match status" value="1"/>
</dbReference>
<dbReference type="SUPFAM" id="SSF111331">
    <property type="entry name" value="NAD kinase/diacylglycerol kinase-like"/>
    <property type="match status" value="1"/>
</dbReference>
<dbReference type="PROSITE" id="PS00118">
    <property type="entry name" value="PA2_HIS"/>
    <property type="match status" value="1"/>
</dbReference>
<feature type="chain" id="PRO_0000233704" description="Putative NAD kinase 3">
    <location>
        <begin position="1"/>
        <end position="494"/>
    </location>
</feature>
<name>NADK3_ORYSJ</name>
<protein>
    <recommendedName>
        <fullName>Putative NAD kinase 3</fullName>
        <ecNumber>2.7.1.23</ecNumber>
    </recommendedName>
</protein>
<gene>
    <name type="ordered locus">Os05g0388400</name>
    <name type="ordered locus">LOC_Os05g32210</name>
    <name type="ORF">OSJNBa0073E05.16</name>
</gene>
<accession>Q60E60</accession>
<comment type="catalytic activity">
    <reaction>
        <text>NAD(+) + ATP = ADP + NADP(+) + H(+)</text>
        <dbReference type="Rhea" id="RHEA:18629"/>
        <dbReference type="ChEBI" id="CHEBI:15378"/>
        <dbReference type="ChEBI" id="CHEBI:30616"/>
        <dbReference type="ChEBI" id="CHEBI:57540"/>
        <dbReference type="ChEBI" id="CHEBI:58349"/>
        <dbReference type="ChEBI" id="CHEBI:456216"/>
        <dbReference type="EC" id="2.7.1.23"/>
    </reaction>
</comment>
<comment type="similarity">
    <text evidence="1">Belongs to the NAD kinase family.</text>
</comment>
<reference key="1">
    <citation type="journal article" date="2005" name="Mol. Genet. Genomics">
        <title>A fine physical map of the rice chromosome 5.</title>
        <authorList>
            <person name="Cheng C.-H."/>
            <person name="Chung M.C."/>
            <person name="Liu S.-M."/>
            <person name="Chen S.-K."/>
            <person name="Kao F.Y."/>
            <person name="Lin S.-J."/>
            <person name="Hsiao S.-H."/>
            <person name="Tseng I.C."/>
            <person name="Hsing Y.-I.C."/>
            <person name="Wu H.-P."/>
            <person name="Chen C.-S."/>
            <person name="Shaw J.-F."/>
            <person name="Wu J."/>
            <person name="Matsumoto T."/>
            <person name="Sasaki T."/>
            <person name="Chen H.-C."/>
            <person name="Chow T.-Y."/>
        </authorList>
    </citation>
    <scope>NUCLEOTIDE SEQUENCE [LARGE SCALE GENOMIC DNA]</scope>
    <source>
        <strain>cv. Nipponbare</strain>
    </source>
</reference>
<reference key="2">
    <citation type="journal article" date="2005" name="Nature">
        <title>The map-based sequence of the rice genome.</title>
        <authorList>
            <consortium name="International rice genome sequencing project (IRGSP)"/>
        </authorList>
    </citation>
    <scope>NUCLEOTIDE SEQUENCE [LARGE SCALE GENOMIC DNA]</scope>
    <source>
        <strain>cv. Nipponbare</strain>
    </source>
</reference>
<reference key="3">
    <citation type="journal article" date="2013" name="Rice">
        <title>Improvement of the Oryza sativa Nipponbare reference genome using next generation sequence and optical map data.</title>
        <authorList>
            <person name="Kawahara Y."/>
            <person name="de la Bastide M."/>
            <person name="Hamilton J.P."/>
            <person name="Kanamori H."/>
            <person name="McCombie W.R."/>
            <person name="Ouyang S."/>
            <person name="Schwartz D.C."/>
            <person name="Tanaka T."/>
            <person name="Wu J."/>
            <person name="Zhou S."/>
            <person name="Childs K.L."/>
            <person name="Davidson R.M."/>
            <person name="Lin H."/>
            <person name="Quesada-Ocampo L."/>
            <person name="Vaillancourt B."/>
            <person name="Sakai H."/>
            <person name="Lee S.S."/>
            <person name="Kim J."/>
            <person name="Numa H."/>
            <person name="Itoh T."/>
            <person name="Buell C.R."/>
            <person name="Matsumoto T."/>
        </authorList>
    </citation>
    <scope>GENOME REANNOTATION</scope>
    <source>
        <strain>cv. Nipponbare</strain>
    </source>
</reference>
<sequence>MESERAAYAFLPQTPIKSTDAHLVEFSEAMRAVAKTLRQVAEGKAAAQAEAAEWKRKYELEKAVKAHRHNTVTKGCSNCDKEKLEQLASQLTLETTSVDPTSCCGNHEICSRQILQDECPGTNKISHDKIAARKAPFKLSWGCNGDNNGQHKHDFVSFEKGDITTAERSNKQILLKWESPPQTVLFVTKPNSNSVHALCAEMVRWLKEHNNINIFVEPRVSKELVTEDSYFNFIQTWDNDEEMKTLHTKVDLIVTLGGDGTVLWAASLFKGPVPPVVAFSLGSLGFMTPFSSELYRECLDHVLKRPFGITLRSRLQCHVIYDSAKNEVDTEEPILVLNEVTIDRGMSSYLTYLECYCDSSFVTRVQGDGLIISTTSGSTAYSLAAGGSMVHPQVPGILFTPICPHSLSFRPLILPEYVTLRVQVPINSRGQAWASFDGKGRKQLGPGDALICSISPWPVPTACLVDSTTDFLRSIHEGLHWNLRKSQSFDGPVA</sequence>